<feature type="signal peptide">
    <location>
        <begin position="1"/>
        <end position="30"/>
    </location>
</feature>
<feature type="chain" id="PRO_0000032928" description="Prolactin">
    <location>
        <begin position="31"/>
        <end position="229"/>
    </location>
</feature>
<feature type="disulfide bond" evidence="1">
    <location>
        <begin position="34"/>
        <end position="41"/>
    </location>
</feature>
<feature type="disulfide bond" evidence="1">
    <location>
        <begin position="88"/>
        <end position="204"/>
    </location>
</feature>
<feature type="disulfide bond" evidence="1">
    <location>
        <begin position="221"/>
        <end position="229"/>
    </location>
</feature>
<feature type="sequence conflict" description="In Ref. 1 and 4." evidence="2" ref="1 4">
    <original>D</original>
    <variation>H</variation>
    <location>
        <position position="171"/>
    </location>
</feature>
<feature type="sequence conflict" description="In Ref. 1 and 4." evidence="2" ref="1 4">
    <original>W</original>
    <variation>S</variation>
    <location>
        <position position="180"/>
    </location>
</feature>
<feature type="sequence conflict" description="In Ref. 1 and 4." evidence="2" ref="1 4">
    <original>L</original>
    <variation>H</variation>
    <location>
        <position position="205"/>
    </location>
</feature>
<organism>
    <name type="scientific">Gallus gallus</name>
    <name type="common">Chicken</name>
    <dbReference type="NCBI Taxonomy" id="9031"/>
    <lineage>
        <taxon>Eukaryota</taxon>
        <taxon>Metazoa</taxon>
        <taxon>Chordata</taxon>
        <taxon>Craniata</taxon>
        <taxon>Vertebrata</taxon>
        <taxon>Euteleostomi</taxon>
        <taxon>Archelosauria</taxon>
        <taxon>Archosauria</taxon>
        <taxon>Dinosauria</taxon>
        <taxon>Saurischia</taxon>
        <taxon>Theropoda</taxon>
        <taxon>Coelurosauria</taxon>
        <taxon>Aves</taxon>
        <taxon>Neognathae</taxon>
        <taxon>Galloanserae</taxon>
        <taxon>Galliformes</taxon>
        <taxon>Phasianidae</taxon>
        <taxon>Phasianinae</taxon>
        <taxon>Gallus</taxon>
    </lineage>
</organism>
<accession>P14676</accession>
<accession>Q66XJ8</accession>
<accession>Q90ZB1</accession>
<accession>Q9DEI3</accession>
<name>PRL_CHICK</name>
<evidence type="ECO:0000250" key="1"/>
<evidence type="ECO:0000305" key="2"/>
<gene>
    <name type="primary">PRL</name>
</gene>
<keyword id="KW-1015">Disulfide bond</keyword>
<keyword id="KW-0372">Hormone</keyword>
<keyword id="KW-1185">Reference proteome</keyword>
<keyword id="KW-0964">Secreted</keyword>
<keyword id="KW-0732">Signal</keyword>
<reference key="1">
    <citation type="journal article" date="1989" name="J. Biol. Chem.">
        <title>Primary structure of chicken pituitary prolactin deduced from the cDNA sequence. Conserved and specific amino acid residues in the domains of the prolactins.</title>
        <authorList>
            <person name="Watahiki M."/>
            <person name="Yamamoto M."/>
            <person name="Yamakawa M."/>
            <person name="Tanaka M."/>
            <person name="Nakashima K."/>
        </authorList>
    </citation>
    <scope>NUCLEOTIDE SEQUENCE [MRNA]</scope>
</reference>
<reference key="2">
    <citation type="journal article" date="1989" name="J. Mol. Endocrinol.">
        <title>Molecular cloning and sequence analysis of putative chicken prolactin cDNA.</title>
        <authorList>
            <person name="Hanks M.C."/>
            <person name="Alonzi J.A."/>
            <person name="Sharp P.J."/>
            <person name="Sang H.M."/>
        </authorList>
    </citation>
    <scope>NUCLEOTIDE SEQUENCE [MRNA]</scope>
</reference>
<reference key="3">
    <citation type="submission" date="1998-02" db="EMBL/GenBank/DDBJ databases">
        <title>Cloning and characterization of chicken prolactin gene.</title>
        <authorList>
            <person name="Ohkubo T."/>
            <person name="Tanaka M."/>
            <person name="Nakashima K."/>
        </authorList>
    </citation>
    <scope>NUCLEOTIDE SEQUENCE [GENOMIC DNA]</scope>
</reference>
<reference key="4">
    <citation type="submission" date="2001-08" db="EMBL/GenBank/DDBJ databases">
        <title>Genomic sequence of chicken prolactin gene.</title>
        <authorList>
            <person name="Au W.L."/>
            <person name="Leung F.C."/>
        </authorList>
    </citation>
    <scope>NUCLEOTIDE SEQUENCE [GENOMIC DNA]</scope>
</reference>
<reference key="5">
    <citation type="journal article" date="2005" name="Yi Chuan">
        <title>Polymorphisms and bioinformatics analysis of chicken prolactin gene.</title>
        <authorList>
            <person name="Cui J.X."/>
            <person name="Du H.L."/>
            <person name="Zhang X.Q."/>
        </authorList>
    </citation>
    <scope>NUCLEOTIDE SEQUENCE [GENOMIC DNA]</scope>
    <source>
        <tissue>Blood</tissue>
    </source>
</reference>
<sequence length="229" mass="25863">MSNRGASLKGLFLAVLLVSNTLLTKEGVTSLPICPIGSVNCQVSLGELFDRAVKLSHYIHYLSSEIFNEFDERYAQGRGFITKAVNGCHTSSLTTPEDKEQAQQIHHEDLLNLVVGVLRSWNDPLIHLASEVQRIKEAPDTILWKAVEIEEQNKRLLEGMEKIVGRVHSGDAGNEIYSHWDGLPSLQLADEDSRLFAFYNLLHCLRRDSHKIDNYLKVLKCRLIHDSNC</sequence>
<comment type="subcellular location">
    <subcellularLocation>
        <location>Secreted</location>
    </subcellularLocation>
</comment>
<comment type="similarity">
    <text evidence="2">Belongs to the somatotropin/prolactin family.</text>
</comment>
<protein>
    <recommendedName>
        <fullName>Prolactin</fullName>
        <shortName>PRL</shortName>
    </recommendedName>
</protein>
<dbReference type="EMBL" id="J04614">
    <property type="protein sequence ID" value="AAA49040.1"/>
    <property type="molecule type" value="mRNA"/>
</dbReference>
<dbReference type="EMBL" id="AB011438">
    <property type="protein sequence ID" value="BAB18728.1"/>
    <property type="molecule type" value="Genomic_DNA"/>
</dbReference>
<dbReference type="EMBL" id="AF288765">
    <property type="protein sequence ID" value="AAG01026.1"/>
    <property type="molecule type" value="Genomic_DNA"/>
</dbReference>
<dbReference type="EMBL" id="AY588297">
    <property type="protein sequence ID" value="AAT02222.1"/>
    <property type="molecule type" value="Genomic_DNA"/>
</dbReference>
<dbReference type="EMBL" id="AY588296">
    <property type="protein sequence ID" value="AAT02222.1"/>
    <property type="status" value="JOINED"/>
    <property type="molecule type" value="Genomic_DNA"/>
</dbReference>
<dbReference type="EMBL" id="AY588295">
    <property type="protein sequence ID" value="AAT02222.1"/>
    <property type="status" value="JOINED"/>
    <property type="molecule type" value="Genomic_DNA"/>
</dbReference>
<dbReference type="EMBL" id="AY588294">
    <property type="protein sequence ID" value="AAT02222.1"/>
    <property type="status" value="JOINED"/>
    <property type="molecule type" value="Genomic_DNA"/>
</dbReference>
<dbReference type="EMBL" id="AY588304">
    <property type="protein sequence ID" value="AAT02223.1"/>
    <property type="molecule type" value="Genomic_DNA"/>
</dbReference>
<dbReference type="EMBL" id="AY588301">
    <property type="protein sequence ID" value="AAT02223.1"/>
    <property type="status" value="JOINED"/>
    <property type="molecule type" value="Genomic_DNA"/>
</dbReference>
<dbReference type="EMBL" id="AY588302">
    <property type="protein sequence ID" value="AAT02223.1"/>
    <property type="status" value="JOINED"/>
    <property type="molecule type" value="Genomic_DNA"/>
</dbReference>
<dbReference type="EMBL" id="AY588303">
    <property type="protein sequence ID" value="AAT02223.1"/>
    <property type="status" value="JOINED"/>
    <property type="molecule type" value="Genomic_DNA"/>
</dbReference>
<dbReference type="EMBL" id="AY588311">
    <property type="protein sequence ID" value="AAT02224.1"/>
    <property type="molecule type" value="Genomic_DNA"/>
</dbReference>
<dbReference type="EMBL" id="AY588308">
    <property type="protein sequence ID" value="AAT02224.1"/>
    <property type="status" value="JOINED"/>
    <property type="molecule type" value="Genomic_DNA"/>
</dbReference>
<dbReference type="EMBL" id="AY588309">
    <property type="protein sequence ID" value="AAT02224.1"/>
    <property type="status" value="JOINED"/>
    <property type="molecule type" value="Genomic_DNA"/>
</dbReference>
<dbReference type="EMBL" id="AY588310">
    <property type="protein sequence ID" value="AAT02224.1"/>
    <property type="status" value="JOINED"/>
    <property type="molecule type" value="Genomic_DNA"/>
</dbReference>
<dbReference type="EMBL" id="AY588318">
    <property type="protein sequence ID" value="AAT02225.1"/>
    <property type="molecule type" value="Genomic_DNA"/>
</dbReference>
<dbReference type="EMBL" id="AY588316">
    <property type="protein sequence ID" value="AAT02225.1"/>
    <property type="status" value="JOINED"/>
    <property type="molecule type" value="Genomic_DNA"/>
</dbReference>
<dbReference type="EMBL" id="AY588317">
    <property type="protein sequence ID" value="AAT02225.1"/>
    <property type="status" value="JOINED"/>
    <property type="molecule type" value="Genomic_DNA"/>
</dbReference>
<dbReference type="EMBL" id="AY588315">
    <property type="protein sequence ID" value="AAT02225.1"/>
    <property type="status" value="JOINED"/>
    <property type="molecule type" value="Genomic_DNA"/>
</dbReference>
<dbReference type="PIR" id="A60972">
    <property type="entry name" value="A60972"/>
</dbReference>
<dbReference type="RefSeq" id="NP_990797.2">
    <property type="nucleotide sequence ID" value="NM_205466.3"/>
</dbReference>
<dbReference type="SMR" id="P14676"/>
<dbReference type="STRING" id="9031.ENSGALP00000020651"/>
<dbReference type="PaxDb" id="9031-ENSGALP00000020651"/>
<dbReference type="Ensembl" id="ENSGALT00010019281.1">
    <property type="protein sequence ID" value="ENSGALP00010010829.1"/>
    <property type="gene ID" value="ENSGALG00010008082.1"/>
</dbReference>
<dbReference type="GeneID" id="396453"/>
<dbReference type="KEGG" id="gga:396453"/>
<dbReference type="CTD" id="5617"/>
<dbReference type="VEuPathDB" id="HostDB:geneid_396453"/>
<dbReference type="eggNOG" id="ENOG502QYU3">
    <property type="taxonomic scope" value="Eukaryota"/>
</dbReference>
<dbReference type="GeneTree" id="ENSGT00950000182818"/>
<dbReference type="HOGENOM" id="CLU_088274_0_1_1"/>
<dbReference type="InParanoid" id="P14676"/>
<dbReference type="OMA" id="EVYSRWS"/>
<dbReference type="OrthoDB" id="9946219at2759"/>
<dbReference type="PhylomeDB" id="P14676"/>
<dbReference type="TreeFam" id="TF332592"/>
<dbReference type="Reactome" id="R-GGA-1170546">
    <property type="pathway name" value="Prolactin receptor signaling"/>
</dbReference>
<dbReference type="Reactome" id="R-GGA-982772">
    <property type="pathway name" value="Growth hormone receptor signaling"/>
</dbReference>
<dbReference type="PRO" id="PR:P14676"/>
<dbReference type="Proteomes" id="UP000000539">
    <property type="component" value="Chromosome 2"/>
</dbReference>
<dbReference type="Bgee" id="ENSGALG00000012671">
    <property type="expression patterns" value="Expressed in brain and 1 other cell type or tissue"/>
</dbReference>
<dbReference type="GO" id="GO:0005615">
    <property type="term" value="C:extracellular space"/>
    <property type="evidence" value="ECO:0000314"/>
    <property type="project" value="AgBase"/>
</dbReference>
<dbReference type="GO" id="GO:0005179">
    <property type="term" value="F:hormone activity"/>
    <property type="evidence" value="ECO:0000318"/>
    <property type="project" value="GO_Central"/>
</dbReference>
<dbReference type="GO" id="GO:0007166">
    <property type="term" value="P:cell surface receptor signaling pathway"/>
    <property type="evidence" value="ECO:0000318"/>
    <property type="project" value="GO_Central"/>
</dbReference>
<dbReference type="GO" id="GO:0001937">
    <property type="term" value="P:negative regulation of endothelial cell proliferation"/>
    <property type="evidence" value="ECO:0007669"/>
    <property type="project" value="Ensembl"/>
</dbReference>
<dbReference type="GO" id="GO:0033685">
    <property type="term" value="P:negative regulation of luteinizing hormone secretion"/>
    <property type="evidence" value="ECO:0000304"/>
    <property type="project" value="AgBase"/>
</dbReference>
<dbReference type="GO" id="GO:0043123">
    <property type="term" value="P:positive regulation of canonical NF-kappaB signal transduction"/>
    <property type="evidence" value="ECO:0007669"/>
    <property type="project" value="Ensembl"/>
</dbReference>
<dbReference type="GO" id="GO:1902895">
    <property type="term" value="P:positive regulation of miRNA transcription"/>
    <property type="evidence" value="ECO:0007669"/>
    <property type="project" value="Ensembl"/>
</dbReference>
<dbReference type="GO" id="GO:0046427">
    <property type="term" value="P:positive regulation of receptor signaling pathway via JAK-STAT"/>
    <property type="evidence" value="ECO:0000318"/>
    <property type="project" value="GO_Central"/>
</dbReference>
<dbReference type="GO" id="GO:0038161">
    <property type="term" value="P:prolactin signaling pathway"/>
    <property type="evidence" value="ECO:0007669"/>
    <property type="project" value="Ensembl"/>
</dbReference>
<dbReference type="GO" id="GO:0031667">
    <property type="term" value="P:response to nutrient levels"/>
    <property type="evidence" value="ECO:0000318"/>
    <property type="project" value="GO_Central"/>
</dbReference>
<dbReference type="CDD" id="cd10288">
    <property type="entry name" value="prolactin_like"/>
    <property type="match status" value="1"/>
</dbReference>
<dbReference type="FunFam" id="1.20.1250.10:FF:000003">
    <property type="entry name" value="Prolactin"/>
    <property type="match status" value="1"/>
</dbReference>
<dbReference type="Gene3D" id="1.20.1250.10">
    <property type="match status" value="1"/>
</dbReference>
<dbReference type="InterPro" id="IPR009079">
    <property type="entry name" value="4_helix_cytokine-like_core"/>
</dbReference>
<dbReference type="InterPro" id="IPR001400">
    <property type="entry name" value="Somatotropin/Prolactin"/>
</dbReference>
<dbReference type="InterPro" id="IPR018116">
    <property type="entry name" value="Somatotropin_CS"/>
</dbReference>
<dbReference type="PANTHER" id="PTHR11417:SF5">
    <property type="entry name" value="PROLACTIN"/>
    <property type="match status" value="1"/>
</dbReference>
<dbReference type="PANTHER" id="PTHR11417">
    <property type="entry name" value="SOMATOTROPIN,PROLACTIN"/>
    <property type="match status" value="1"/>
</dbReference>
<dbReference type="Pfam" id="PF00103">
    <property type="entry name" value="Hormone_1"/>
    <property type="match status" value="1"/>
</dbReference>
<dbReference type="PRINTS" id="PR00836">
    <property type="entry name" value="SOMATOTROPIN"/>
</dbReference>
<dbReference type="SUPFAM" id="SSF47266">
    <property type="entry name" value="4-helical cytokines"/>
    <property type="match status" value="1"/>
</dbReference>
<dbReference type="PROSITE" id="PS00266">
    <property type="entry name" value="SOMATOTROPIN_1"/>
    <property type="match status" value="1"/>
</dbReference>
<dbReference type="PROSITE" id="PS00338">
    <property type="entry name" value="SOMATOTROPIN_2"/>
    <property type="match status" value="1"/>
</dbReference>
<proteinExistence type="evidence at transcript level"/>